<gene>
    <name evidence="1" type="primary">ihfA</name>
    <name evidence="1" type="synonym">himA</name>
    <name type="ordered locus">RL1640</name>
</gene>
<dbReference type="EMBL" id="AM236080">
    <property type="protein sequence ID" value="CAK07135.1"/>
    <property type="molecule type" value="Genomic_DNA"/>
</dbReference>
<dbReference type="RefSeq" id="WP_003547228.1">
    <property type="nucleotide sequence ID" value="NC_008380.1"/>
</dbReference>
<dbReference type="SMR" id="Q1MIS5"/>
<dbReference type="EnsemblBacteria" id="CAK07135">
    <property type="protein sequence ID" value="CAK07135"/>
    <property type="gene ID" value="RL1640"/>
</dbReference>
<dbReference type="KEGG" id="rle:RL1640"/>
<dbReference type="eggNOG" id="COG0776">
    <property type="taxonomic scope" value="Bacteria"/>
</dbReference>
<dbReference type="HOGENOM" id="CLU_105066_1_1_5"/>
<dbReference type="Proteomes" id="UP000006575">
    <property type="component" value="Chromosome"/>
</dbReference>
<dbReference type="GO" id="GO:0005829">
    <property type="term" value="C:cytosol"/>
    <property type="evidence" value="ECO:0007669"/>
    <property type="project" value="TreeGrafter"/>
</dbReference>
<dbReference type="GO" id="GO:0003677">
    <property type="term" value="F:DNA binding"/>
    <property type="evidence" value="ECO:0007669"/>
    <property type="project" value="UniProtKB-UniRule"/>
</dbReference>
<dbReference type="GO" id="GO:0030527">
    <property type="term" value="F:structural constituent of chromatin"/>
    <property type="evidence" value="ECO:0007669"/>
    <property type="project" value="InterPro"/>
</dbReference>
<dbReference type="GO" id="GO:0006310">
    <property type="term" value="P:DNA recombination"/>
    <property type="evidence" value="ECO:0007669"/>
    <property type="project" value="UniProtKB-UniRule"/>
</dbReference>
<dbReference type="GO" id="GO:0009893">
    <property type="term" value="P:positive regulation of metabolic process"/>
    <property type="evidence" value="ECO:0007669"/>
    <property type="project" value="UniProtKB-ARBA"/>
</dbReference>
<dbReference type="GO" id="GO:0006355">
    <property type="term" value="P:regulation of DNA-templated transcription"/>
    <property type="evidence" value="ECO:0007669"/>
    <property type="project" value="UniProtKB-UniRule"/>
</dbReference>
<dbReference type="GO" id="GO:0006417">
    <property type="term" value="P:regulation of translation"/>
    <property type="evidence" value="ECO:0007669"/>
    <property type="project" value="UniProtKB-UniRule"/>
</dbReference>
<dbReference type="CDD" id="cd13835">
    <property type="entry name" value="IHF_A"/>
    <property type="match status" value="1"/>
</dbReference>
<dbReference type="Gene3D" id="4.10.520.10">
    <property type="entry name" value="IHF-like DNA-binding proteins"/>
    <property type="match status" value="1"/>
</dbReference>
<dbReference type="HAMAP" id="MF_00380">
    <property type="entry name" value="IHF_alpha"/>
    <property type="match status" value="1"/>
</dbReference>
<dbReference type="InterPro" id="IPR000119">
    <property type="entry name" value="Hist_DNA-bd"/>
</dbReference>
<dbReference type="InterPro" id="IPR020816">
    <property type="entry name" value="Histone-like_DNA-bd_CS"/>
</dbReference>
<dbReference type="InterPro" id="IPR010992">
    <property type="entry name" value="IHF-like_DNA-bd_dom_sf"/>
</dbReference>
<dbReference type="InterPro" id="IPR005684">
    <property type="entry name" value="IHF_alpha"/>
</dbReference>
<dbReference type="NCBIfam" id="TIGR00987">
    <property type="entry name" value="himA"/>
    <property type="match status" value="1"/>
</dbReference>
<dbReference type="NCBIfam" id="NF001401">
    <property type="entry name" value="PRK00285.1"/>
    <property type="match status" value="1"/>
</dbReference>
<dbReference type="PANTHER" id="PTHR33175">
    <property type="entry name" value="DNA-BINDING PROTEIN HU"/>
    <property type="match status" value="1"/>
</dbReference>
<dbReference type="PANTHER" id="PTHR33175:SF2">
    <property type="entry name" value="INTEGRATION HOST FACTOR SUBUNIT ALPHA"/>
    <property type="match status" value="1"/>
</dbReference>
<dbReference type="Pfam" id="PF00216">
    <property type="entry name" value="Bac_DNA_binding"/>
    <property type="match status" value="1"/>
</dbReference>
<dbReference type="PRINTS" id="PR01727">
    <property type="entry name" value="DNABINDINGHU"/>
</dbReference>
<dbReference type="SMART" id="SM00411">
    <property type="entry name" value="BHL"/>
    <property type="match status" value="1"/>
</dbReference>
<dbReference type="SUPFAM" id="SSF47729">
    <property type="entry name" value="IHF-like DNA-binding proteins"/>
    <property type="match status" value="1"/>
</dbReference>
<dbReference type="PROSITE" id="PS00045">
    <property type="entry name" value="HISTONE_LIKE"/>
    <property type="match status" value="1"/>
</dbReference>
<proteinExistence type="inferred from homology"/>
<feature type="chain" id="PRO_0000277765" description="Integration host factor subunit alpha">
    <location>
        <begin position="1"/>
        <end position="112"/>
    </location>
</feature>
<evidence type="ECO:0000255" key="1">
    <source>
        <dbReference type="HAMAP-Rule" id="MF_00380"/>
    </source>
</evidence>
<name>IHFA_RHIJ3</name>
<comment type="function">
    <text evidence="1">This protein is one of the two subunits of integration host factor, a specific DNA-binding protein that functions in genetic recombination as well as in transcriptional and translational control.</text>
</comment>
<comment type="subunit">
    <text evidence="1">Heterodimer of an alpha and a beta chain.</text>
</comment>
<comment type="similarity">
    <text evidence="1">Belongs to the bacterial histone-like protein family.</text>
</comment>
<keyword id="KW-0233">DNA recombination</keyword>
<keyword id="KW-0238">DNA-binding</keyword>
<keyword id="KW-0804">Transcription</keyword>
<keyword id="KW-0805">Transcription regulation</keyword>
<keyword id="KW-0810">Translation regulation</keyword>
<accession>Q1MIS5</accession>
<protein>
    <recommendedName>
        <fullName evidence="1">Integration host factor subunit alpha</fullName>
        <shortName evidence="1">IHF-alpha</shortName>
    </recommendedName>
</protein>
<sequence>MTGKTVTRADLAESVFRKVGLSRTESAELVETVIDEICNAIVRGETVKLSSFATFQVRDKNERIGRNPKTGEEVPISPRRVMTFKASNVLKTRILKSHVARKIKLKPLNPAP</sequence>
<reference key="1">
    <citation type="journal article" date="2006" name="Genome Biol.">
        <title>The genome of Rhizobium leguminosarum has recognizable core and accessory components.</title>
        <authorList>
            <person name="Young J.P.W."/>
            <person name="Crossman L.C."/>
            <person name="Johnston A.W.B."/>
            <person name="Thomson N.R."/>
            <person name="Ghazoui Z.F."/>
            <person name="Hull K.H."/>
            <person name="Wexler M."/>
            <person name="Curson A.R.J."/>
            <person name="Todd J.D."/>
            <person name="Poole P.S."/>
            <person name="Mauchline T.H."/>
            <person name="East A.K."/>
            <person name="Quail M.A."/>
            <person name="Churcher C."/>
            <person name="Arrowsmith C."/>
            <person name="Cherevach I."/>
            <person name="Chillingworth T."/>
            <person name="Clarke K."/>
            <person name="Cronin A."/>
            <person name="Davis P."/>
            <person name="Fraser A."/>
            <person name="Hance Z."/>
            <person name="Hauser H."/>
            <person name="Jagels K."/>
            <person name="Moule S."/>
            <person name="Mungall K."/>
            <person name="Norbertczak H."/>
            <person name="Rabbinowitsch E."/>
            <person name="Sanders M."/>
            <person name="Simmonds M."/>
            <person name="Whitehead S."/>
            <person name="Parkhill J."/>
        </authorList>
    </citation>
    <scope>NUCLEOTIDE SEQUENCE [LARGE SCALE GENOMIC DNA]</scope>
    <source>
        <strain>DSM 114642 / LMG 32736 / 3841</strain>
    </source>
</reference>
<organism>
    <name type="scientific">Rhizobium johnstonii (strain DSM 114642 / LMG 32736 / 3841)</name>
    <name type="common">Rhizobium leguminosarum bv. viciae</name>
    <dbReference type="NCBI Taxonomy" id="216596"/>
    <lineage>
        <taxon>Bacteria</taxon>
        <taxon>Pseudomonadati</taxon>
        <taxon>Pseudomonadota</taxon>
        <taxon>Alphaproteobacteria</taxon>
        <taxon>Hyphomicrobiales</taxon>
        <taxon>Rhizobiaceae</taxon>
        <taxon>Rhizobium/Agrobacterium group</taxon>
        <taxon>Rhizobium</taxon>
        <taxon>Rhizobium johnstonii</taxon>
    </lineage>
</organism>